<evidence type="ECO:0000250" key="1"/>
<evidence type="ECO:0000269" key="2">
    <source>
    </source>
</evidence>
<evidence type="ECO:0000269" key="3">
    <source>
    </source>
</evidence>
<evidence type="ECO:0000303" key="4">
    <source>
    </source>
</evidence>
<evidence type="ECO:0000305" key="5"/>
<dbReference type="EMBL" id="AK129339">
    <property type="protein sequence ID" value="BAC98149.1"/>
    <property type="status" value="ALT_INIT"/>
    <property type="molecule type" value="mRNA"/>
</dbReference>
<dbReference type="EMBL" id="BC013814">
    <property type="protein sequence ID" value="AAH13814.1"/>
    <property type="molecule type" value="mRNA"/>
</dbReference>
<dbReference type="EMBL" id="BC034101">
    <property type="protein sequence ID" value="AAH34101.1"/>
    <property type="molecule type" value="mRNA"/>
</dbReference>
<dbReference type="EMBL" id="AK042231">
    <property type="protein sequence ID" value="BAC31200.1"/>
    <property type="molecule type" value="mRNA"/>
</dbReference>
<dbReference type="CCDS" id="CCDS38451.1">
    <molecule id="Q8K057-1"/>
</dbReference>
<dbReference type="RefSeq" id="NP_080917.1">
    <molecule id="Q8K057-1"/>
    <property type="nucleotide sequence ID" value="NM_026641.2"/>
</dbReference>
<dbReference type="RefSeq" id="XP_006502029.1">
    <molecule id="Q8K057-1"/>
    <property type="nucleotide sequence ID" value="XM_006501966.5"/>
</dbReference>
<dbReference type="SMR" id="Q8K057"/>
<dbReference type="BioGRID" id="212765">
    <property type="interactions" value="5"/>
</dbReference>
<dbReference type="ComplexPortal" id="CPX-5028">
    <property type="entry name" value="Intraflagellar transport complex B"/>
</dbReference>
<dbReference type="FunCoup" id="Q8K057">
    <property type="interactions" value="1064"/>
</dbReference>
<dbReference type="STRING" id="10090.ENSMUSP00000103442"/>
<dbReference type="iPTMnet" id="Q8K057"/>
<dbReference type="PhosphoSitePlus" id="Q8K057"/>
<dbReference type="SwissPalm" id="Q8K057"/>
<dbReference type="PaxDb" id="10090-ENSMUSP00000133263"/>
<dbReference type="ProteomicsDB" id="267214">
    <molecule id="Q8K057-1"/>
</dbReference>
<dbReference type="ProteomicsDB" id="267215">
    <molecule id="Q8K057-2"/>
</dbReference>
<dbReference type="Pumba" id="Q8K057"/>
<dbReference type="Antibodypedia" id="50241">
    <property type="antibodies" value="72 antibodies from 16 providers"/>
</dbReference>
<dbReference type="DNASU" id="68259"/>
<dbReference type="Ensembl" id="ENSMUST00000029347.14">
    <molecule id="Q8K057-1"/>
    <property type="protein sequence ID" value="ENSMUSP00000029347.8"/>
    <property type="gene ID" value="ENSMUSG00000027778.17"/>
</dbReference>
<dbReference type="Ensembl" id="ENSMUST00000107812.8">
    <molecule id="Q8K057-1"/>
    <property type="protein sequence ID" value="ENSMUSP00000103442.2"/>
    <property type="gene ID" value="ENSMUSG00000027778.17"/>
</dbReference>
<dbReference type="GeneID" id="68259"/>
<dbReference type="KEGG" id="mmu:68259"/>
<dbReference type="UCSC" id="uc033hub.1">
    <molecule id="Q8K057-1"/>
    <property type="organism name" value="mouse"/>
</dbReference>
<dbReference type="AGR" id="MGI:1915509"/>
<dbReference type="CTD" id="57560"/>
<dbReference type="MGI" id="MGI:1915509">
    <property type="gene designation" value="Ift80"/>
</dbReference>
<dbReference type="VEuPathDB" id="HostDB:ENSMUSG00000027778"/>
<dbReference type="eggNOG" id="KOG1524">
    <property type="taxonomic scope" value="Eukaryota"/>
</dbReference>
<dbReference type="GeneTree" id="ENSGT00440000033499"/>
<dbReference type="HOGENOM" id="CLU_024638_1_0_1"/>
<dbReference type="InParanoid" id="Q8K057"/>
<dbReference type="OMA" id="WDAQGAN"/>
<dbReference type="OrthoDB" id="408728at2759"/>
<dbReference type="PhylomeDB" id="Q8K057"/>
<dbReference type="TreeFam" id="TF106117"/>
<dbReference type="Reactome" id="R-MMU-5620924">
    <property type="pathway name" value="Intraflagellar transport"/>
</dbReference>
<dbReference type="BioGRID-ORCS" id="68259">
    <property type="hits" value="5 hits in 76 CRISPR screens"/>
</dbReference>
<dbReference type="CD-CODE" id="01CA17F3">
    <property type="entry name" value="Centrosome"/>
</dbReference>
<dbReference type="ChiTaRS" id="Ift80">
    <property type="organism name" value="mouse"/>
</dbReference>
<dbReference type="PRO" id="PR:Q8K057"/>
<dbReference type="Proteomes" id="UP000000589">
    <property type="component" value="Chromosome 3"/>
</dbReference>
<dbReference type="RNAct" id="Q8K057">
    <property type="molecule type" value="protein"/>
</dbReference>
<dbReference type="Bgee" id="ENSMUSG00000027778">
    <property type="expression patterns" value="Expressed in dorsal pancreas and 247 other cell types or tissues"/>
</dbReference>
<dbReference type="ExpressionAtlas" id="Q8K057">
    <property type="expression patterns" value="baseline and differential"/>
</dbReference>
<dbReference type="GO" id="GO:0097731">
    <property type="term" value="C:9+0 non-motile cilium"/>
    <property type="evidence" value="ECO:0000314"/>
    <property type="project" value="MGI"/>
</dbReference>
<dbReference type="GO" id="GO:0005813">
    <property type="term" value="C:centrosome"/>
    <property type="evidence" value="ECO:0000314"/>
    <property type="project" value="MGI"/>
</dbReference>
<dbReference type="GO" id="GO:0036064">
    <property type="term" value="C:ciliary basal body"/>
    <property type="evidence" value="ECO:0000314"/>
    <property type="project" value="MGI"/>
</dbReference>
<dbReference type="GO" id="GO:0005929">
    <property type="term" value="C:cilium"/>
    <property type="evidence" value="ECO:0000314"/>
    <property type="project" value="MGI"/>
</dbReference>
<dbReference type="GO" id="GO:0005737">
    <property type="term" value="C:cytoplasm"/>
    <property type="evidence" value="ECO:0007669"/>
    <property type="project" value="UniProtKB-SubCell"/>
</dbReference>
<dbReference type="GO" id="GO:0030992">
    <property type="term" value="C:intraciliary transport particle B"/>
    <property type="evidence" value="ECO:0000314"/>
    <property type="project" value="UniProtKB"/>
</dbReference>
<dbReference type="GO" id="GO:0006915">
    <property type="term" value="P:apoptotic process"/>
    <property type="evidence" value="ECO:0000315"/>
    <property type="project" value="MGI"/>
</dbReference>
<dbReference type="GO" id="GO:0061975">
    <property type="term" value="P:articular cartilage development"/>
    <property type="evidence" value="ECO:0000315"/>
    <property type="project" value="MGI"/>
</dbReference>
<dbReference type="GO" id="GO:0060348">
    <property type="term" value="P:bone development"/>
    <property type="evidence" value="ECO:0000315"/>
    <property type="project" value="MGI"/>
</dbReference>
<dbReference type="GO" id="GO:0035630">
    <property type="term" value="P:bone mineralization involved in bone maturation"/>
    <property type="evidence" value="ECO:0000315"/>
    <property type="project" value="MGI"/>
</dbReference>
<dbReference type="GO" id="GO:0060349">
    <property type="term" value="P:bone morphogenesis"/>
    <property type="evidence" value="ECO:0000315"/>
    <property type="project" value="MGI"/>
</dbReference>
<dbReference type="GO" id="GO:0007249">
    <property type="term" value="P:canonical NF-kappaB signal transduction"/>
    <property type="evidence" value="ECO:0000315"/>
    <property type="project" value="MGI"/>
</dbReference>
<dbReference type="GO" id="GO:0051216">
    <property type="term" value="P:cartilage development"/>
    <property type="evidence" value="ECO:0000315"/>
    <property type="project" value="MGI"/>
</dbReference>
<dbReference type="GO" id="GO:1990079">
    <property type="term" value="P:cartilage homeostasis"/>
    <property type="evidence" value="ECO:0000315"/>
    <property type="project" value="MGI"/>
</dbReference>
<dbReference type="GO" id="GO:0008283">
    <property type="term" value="P:cell population proliferation"/>
    <property type="evidence" value="ECO:0000315"/>
    <property type="project" value="MGI"/>
</dbReference>
<dbReference type="GO" id="GO:0002062">
    <property type="term" value="P:chondrocyte differentiation"/>
    <property type="evidence" value="ECO:0000315"/>
    <property type="project" value="MGI"/>
</dbReference>
<dbReference type="GO" id="GO:0060271">
    <property type="term" value="P:cilium assembly"/>
    <property type="evidence" value="ECO:0000315"/>
    <property type="project" value="MGI"/>
</dbReference>
<dbReference type="GO" id="GO:0044782">
    <property type="term" value="P:cilium organization"/>
    <property type="evidence" value="ECO:0000315"/>
    <property type="project" value="MGI"/>
</dbReference>
<dbReference type="GO" id="GO:0001958">
    <property type="term" value="P:endochondral ossification"/>
    <property type="evidence" value="ECO:0000315"/>
    <property type="project" value="MGI"/>
</dbReference>
<dbReference type="GO" id="GO:0007163">
    <property type="term" value="P:establishment or maintenance of cell polarity"/>
    <property type="evidence" value="ECO:0000315"/>
    <property type="project" value="MGI"/>
</dbReference>
<dbReference type="GO" id="GO:0008543">
    <property type="term" value="P:fibroblast growth factor receptor signaling pathway"/>
    <property type="evidence" value="ECO:0000315"/>
    <property type="project" value="MGI"/>
</dbReference>
<dbReference type="GO" id="GO:0010467">
    <property type="term" value="P:gene expression"/>
    <property type="evidence" value="ECO:0000315"/>
    <property type="project" value="MGI"/>
</dbReference>
<dbReference type="GO" id="GO:0003418">
    <property type="term" value="P:growth plate cartilage chondrocyte differentiation"/>
    <property type="evidence" value="ECO:0000315"/>
    <property type="project" value="MGI"/>
</dbReference>
<dbReference type="GO" id="GO:0003417">
    <property type="term" value="P:growth plate cartilage development"/>
    <property type="evidence" value="ECO:0000315"/>
    <property type="project" value="MGI"/>
</dbReference>
<dbReference type="GO" id="GO:0035720">
    <property type="term" value="P:intraciliary anterograde transport"/>
    <property type="evidence" value="ECO:0000303"/>
    <property type="project" value="ComplexPortal"/>
</dbReference>
<dbReference type="GO" id="GO:0042073">
    <property type="term" value="P:intraciliary transport"/>
    <property type="evidence" value="ECO:0000305"/>
    <property type="project" value="MGI"/>
</dbReference>
<dbReference type="GO" id="GO:0043616">
    <property type="term" value="P:keratinocyte proliferation"/>
    <property type="evidence" value="ECO:0000315"/>
    <property type="project" value="MGI"/>
</dbReference>
<dbReference type="GO" id="GO:0060173">
    <property type="term" value="P:limb development"/>
    <property type="evidence" value="ECO:0000315"/>
    <property type="project" value="MGI"/>
</dbReference>
<dbReference type="GO" id="GO:0035264">
    <property type="term" value="P:multicellular organism growth"/>
    <property type="evidence" value="ECO:0000315"/>
    <property type="project" value="MGI"/>
</dbReference>
<dbReference type="GO" id="GO:0010839">
    <property type="term" value="P:negative regulation of keratinocyte proliferation"/>
    <property type="evidence" value="ECO:0000315"/>
    <property type="project" value="MGI"/>
</dbReference>
<dbReference type="GO" id="GO:2000051">
    <property type="term" value="P:negative regulation of non-canonical Wnt signaling pathway"/>
    <property type="evidence" value="ECO:0000316"/>
    <property type="project" value="MGI"/>
</dbReference>
<dbReference type="GO" id="GO:0035567">
    <property type="term" value="P:non-canonical Wnt signaling pathway"/>
    <property type="evidence" value="ECO:0000316"/>
    <property type="project" value="MGI"/>
</dbReference>
<dbReference type="GO" id="GO:1905515">
    <property type="term" value="P:non-motile cilium assembly"/>
    <property type="evidence" value="ECO:0000315"/>
    <property type="project" value="MGI"/>
</dbReference>
<dbReference type="GO" id="GO:0071895">
    <property type="term" value="P:odontoblast differentiation"/>
    <property type="evidence" value="ECO:0000315"/>
    <property type="project" value="MGI"/>
</dbReference>
<dbReference type="GO" id="GO:0042476">
    <property type="term" value="P:odontogenesis"/>
    <property type="evidence" value="ECO:0000315"/>
    <property type="project" value="MGI"/>
</dbReference>
<dbReference type="GO" id="GO:0001503">
    <property type="term" value="P:ossification"/>
    <property type="evidence" value="ECO:0000315"/>
    <property type="project" value="MGI"/>
</dbReference>
<dbReference type="GO" id="GO:0001649">
    <property type="term" value="P:osteoblast differentiation"/>
    <property type="evidence" value="ECO:0000315"/>
    <property type="project" value="MGI"/>
</dbReference>
<dbReference type="GO" id="GO:0033687">
    <property type="term" value="P:osteoblast proliferation"/>
    <property type="evidence" value="ECO:0000315"/>
    <property type="project" value="MGI"/>
</dbReference>
<dbReference type="GO" id="GO:0030316">
    <property type="term" value="P:osteoclast differentiation"/>
    <property type="evidence" value="ECO:0000315"/>
    <property type="project" value="MGI"/>
</dbReference>
<dbReference type="GO" id="GO:0043491">
    <property type="term" value="P:phosphatidylinositol 3-kinase/protein kinase B signal transduction"/>
    <property type="evidence" value="ECO:0000315"/>
    <property type="project" value="MGI"/>
</dbReference>
<dbReference type="GO" id="GO:0010498">
    <property type="term" value="P:proteasomal protein catabolic process"/>
    <property type="evidence" value="ECO:0000315"/>
    <property type="project" value="MGI"/>
</dbReference>
<dbReference type="GO" id="GO:0050821">
    <property type="term" value="P:protein stabilization"/>
    <property type="evidence" value="ECO:0000315"/>
    <property type="project" value="MGI"/>
</dbReference>
<dbReference type="GO" id="GO:0016567">
    <property type="term" value="P:protein ubiquitination"/>
    <property type="evidence" value="ECO:0000315"/>
    <property type="project" value="MGI"/>
</dbReference>
<dbReference type="GO" id="GO:0097500">
    <property type="term" value="P:receptor localization to non-motile cilium"/>
    <property type="evidence" value="ECO:0000315"/>
    <property type="project" value="MGI"/>
</dbReference>
<dbReference type="GO" id="GO:1902140">
    <property type="term" value="P:response to inositol"/>
    <property type="evidence" value="ECO:0000314"/>
    <property type="project" value="MGI"/>
</dbReference>
<dbReference type="GO" id="GO:0001501">
    <property type="term" value="P:skeletal system development"/>
    <property type="evidence" value="ECO:0000315"/>
    <property type="project" value="MGI"/>
</dbReference>
<dbReference type="GO" id="GO:0007224">
    <property type="term" value="P:smoothened signaling pathway"/>
    <property type="evidence" value="ECO:0000315"/>
    <property type="project" value="MGI"/>
</dbReference>
<dbReference type="GO" id="GO:0021510">
    <property type="term" value="P:spinal cord development"/>
    <property type="evidence" value="ECO:0000315"/>
    <property type="project" value="MGI"/>
</dbReference>
<dbReference type="GO" id="GO:0048863">
    <property type="term" value="P:stem cell differentiation"/>
    <property type="evidence" value="ECO:0000315"/>
    <property type="project" value="MGI"/>
</dbReference>
<dbReference type="GO" id="GO:0072089">
    <property type="term" value="P:stem cell proliferation"/>
    <property type="evidence" value="ECO:0000315"/>
    <property type="project" value="MGI"/>
</dbReference>
<dbReference type="GO" id="GO:0009888">
    <property type="term" value="P:tissue development"/>
    <property type="evidence" value="ECO:0000315"/>
    <property type="project" value="MGI"/>
</dbReference>
<dbReference type="GO" id="GO:0044691">
    <property type="term" value="P:tooth eruption"/>
    <property type="evidence" value="ECO:0000315"/>
    <property type="project" value="MGI"/>
</dbReference>
<dbReference type="FunFam" id="1.25.40.470:FF:000007">
    <property type="entry name" value="Intraflagellar transport 80 homolog (Chlamydomonas)"/>
    <property type="match status" value="1"/>
</dbReference>
<dbReference type="FunFam" id="2.130.10.10:FF:000298">
    <property type="entry name" value="Intraflagellar transport 80 homolog (Chlamydomonas)"/>
    <property type="match status" value="1"/>
</dbReference>
<dbReference type="FunFam" id="2.130.10.10:FF:000458">
    <property type="entry name" value="Intraflagellar transport 80 homolog (Chlamydomonas)"/>
    <property type="match status" value="1"/>
</dbReference>
<dbReference type="Gene3D" id="1.25.40.470">
    <property type="match status" value="1"/>
</dbReference>
<dbReference type="Gene3D" id="2.130.10.10">
    <property type="entry name" value="YVTN repeat-like/Quinoprotein amine dehydrogenase"/>
    <property type="match status" value="2"/>
</dbReference>
<dbReference type="InterPro" id="IPR056456">
    <property type="entry name" value="Beta-prop_IFT80_2nd"/>
</dbReference>
<dbReference type="InterPro" id="IPR011047">
    <property type="entry name" value="Quinoprotein_ADH-like_sf"/>
</dbReference>
<dbReference type="InterPro" id="IPR056157">
    <property type="entry name" value="TPR_IFT80_172_dom"/>
</dbReference>
<dbReference type="InterPro" id="IPR015943">
    <property type="entry name" value="WD40/YVTN_repeat-like_dom_sf"/>
</dbReference>
<dbReference type="InterPro" id="IPR036322">
    <property type="entry name" value="WD40_repeat_dom_sf"/>
</dbReference>
<dbReference type="InterPro" id="IPR001680">
    <property type="entry name" value="WD40_rpt"/>
</dbReference>
<dbReference type="PANTHER" id="PTHR24098:SF11">
    <property type="entry name" value="INTRAFLAGELLAR TRANSPORT PROTEIN 80 HOMOLOG"/>
    <property type="match status" value="1"/>
</dbReference>
<dbReference type="PANTHER" id="PTHR24098">
    <property type="entry name" value="OUTER SEGMENT 5"/>
    <property type="match status" value="1"/>
</dbReference>
<dbReference type="Pfam" id="PF23335">
    <property type="entry name" value="Beta-prop_IFT80_2nd"/>
    <property type="match status" value="1"/>
</dbReference>
<dbReference type="Pfam" id="PF23387">
    <property type="entry name" value="TPR_IFT80_172"/>
    <property type="match status" value="1"/>
</dbReference>
<dbReference type="Pfam" id="PF00400">
    <property type="entry name" value="WD40"/>
    <property type="match status" value="3"/>
</dbReference>
<dbReference type="SMART" id="SM00320">
    <property type="entry name" value="WD40"/>
    <property type="match status" value="6"/>
</dbReference>
<dbReference type="SUPFAM" id="SSF50998">
    <property type="entry name" value="Quinoprotein alcohol dehydrogenase-like"/>
    <property type="match status" value="1"/>
</dbReference>
<dbReference type="SUPFAM" id="SSF50978">
    <property type="entry name" value="WD40 repeat-like"/>
    <property type="match status" value="1"/>
</dbReference>
<dbReference type="PROSITE" id="PS50082">
    <property type="entry name" value="WD_REPEATS_2"/>
    <property type="match status" value="2"/>
</dbReference>
<dbReference type="PROSITE" id="PS50294">
    <property type="entry name" value="WD_REPEATS_REGION"/>
    <property type="match status" value="1"/>
</dbReference>
<organism>
    <name type="scientific">Mus musculus</name>
    <name type="common">Mouse</name>
    <dbReference type="NCBI Taxonomy" id="10090"/>
    <lineage>
        <taxon>Eukaryota</taxon>
        <taxon>Metazoa</taxon>
        <taxon>Chordata</taxon>
        <taxon>Craniata</taxon>
        <taxon>Vertebrata</taxon>
        <taxon>Euteleostomi</taxon>
        <taxon>Mammalia</taxon>
        <taxon>Eutheria</taxon>
        <taxon>Euarchontoglires</taxon>
        <taxon>Glires</taxon>
        <taxon>Rodentia</taxon>
        <taxon>Myomorpha</taxon>
        <taxon>Muroidea</taxon>
        <taxon>Muridae</taxon>
        <taxon>Murinae</taxon>
        <taxon>Mus</taxon>
        <taxon>Mus</taxon>
    </lineage>
</organism>
<comment type="function">
    <text evidence="1">Component of the intraflagellar transport (IFT) complex B, which is essential for the development and maintenance of motile and sensory cilia.</text>
</comment>
<comment type="subunit">
    <text evidence="2 3">Component of the IFT complex B, at least composed of IFT20, IFT22, IFT25, IFT27, IFT46, IFT52, TRAF3IP1/IFT54, IFT57, IFT74, IFT80, IFT81, and IFT88 (PubMed:19253336, PubMed:23810713). Interacts with IFT88 (PubMed:19253336). Interacts with IFT57 and IFT70B (PubMed:23810713).</text>
</comment>
<comment type="subcellular location">
    <subcellularLocation>
        <location>Cytoplasm</location>
    </subcellularLocation>
    <subcellularLocation>
        <location>Cytoplasm</location>
        <location>Cytoskeleton</location>
        <location>Cilium basal body</location>
    </subcellularLocation>
    <subcellularLocation>
        <location>Cytoplasm</location>
        <location>Cytoskeleton</location>
        <location>Cilium axoneme</location>
    </subcellularLocation>
    <text>Basal body and ciliary axoneme in the chondrocytic ATDC-5 cell line.</text>
</comment>
<comment type="alternative products">
    <event type="alternative splicing"/>
    <isoform>
        <id>Q8K057-1</id>
        <name>1</name>
        <sequence type="displayed"/>
    </isoform>
    <isoform>
        <id>Q8K057-2</id>
        <name>2</name>
        <sequence type="described" ref="VSP_027991 VSP_027992"/>
    </isoform>
</comment>
<comment type="sequence caution" evidence="5">
    <conflict type="erroneous initiation">
        <sequence resource="EMBL-CDS" id="BAC98149"/>
    </conflict>
</comment>
<gene>
    <name type="primary">Ift80</name>
    <name type="synonym">Kiaa1374</name>
    <name type="synonym">Wdr56</name>
</gene>
<proteinExistence type="evidence at protein level"/>
<feature type="chain" id="PRO_0000051043" description="Intraflagellar transport protein 80 homolog">
    <location>
        <begin position="1"/>
        <end position="777"/>
    </location>
</feature>
<feature type="repeat" description="WD 1">
    <location>
        <begin position="12"/>
        <end position="50"/>
    </location>
</feature>
<feature type="repeat" description="WD 2">
    <location>
        <begin position="104"/>
        <end position="143"/>
    </location>
</feature>
<feature type="repeat" description="WD 3">
    <location>
        <begin position="145"/>
        <end position="185"/>
    </location>
</feature>
<feature type="repeat" description="WD 4">
    <location>
        <begin position="186"/>
        <end position="225"/>
    </location>
</feature>
<feature type="repeat" description="WD 5">
    <location>
        <begin position="227"/>
        <end position="265"/>
    </location>
</feature>
<feature type="repeat" description="WD 6">
    <location>
        <begin position="267"/>
        <end position="306"/>
    </location>
</feature>
<feature type="repeat" description="WD 7">
    <location>
        <begin position="504"/>
        <end position="542"/>
    </location>
</feature>
<feature type="splice variant" id="VSP_027991" description="In isoform 2." evidence="4">
    <original>I</original>
    <variation>K</variation>
    <location>
        <position position="439"/>
    </location>
</feature>
<feature type="splice variant" id="VSP_027992" description="In isoform 2." evidence="4">
    <location>
        <position position="440"/>
    </location>
</feature>
<accession>Q8K057</accession>
<accession>Q6ZPT0</accession>
<accession>Q8C9F1</accession>
<accession>Q91YV4</accession>
<name>IFT80_MOUSE</name>
<keyword id="KW-0025">Alternative splicing</keyword>
<keyword id="KW-0966">Cell projection</keyword>
<keyword id="KW-0969">Cilium</keyword>
<keyword id="KW-0963">Cytoplasm</keyword>
<keyword id="KW-0206">Cytoskeleton</keyword>
<keyword id="KW-1185">Reference proteome</keyword>
<keyword id="KW-0677">Repeat</keyword>
<keyword id="KW-0853">WD repeat</keyword>
<protein>
    <recommendedName>
        <fullName>Intraflagellar transport protein 80 homolog</fullName>
    </recommendedName>
    <alternativeName>
        <fullName>WD repeat-containing protein 56</fullName>
    </alternativeName>
</protein>
<reference key="1">
    <citation type="journal article" date="2003" name="DNA Res.">
        <title>Prediction of the coding sequences of mouse homologues of KIAA gene: III. The complete nucleotide sequences of 500 mouse KIAA-homologous cDNAs identified by screening of terminal sequences of cDNA clones randomly sampled from size-fractionated libraries.</title>
        <authorList>
            <person name="Okazaki N."/>
            <person name="Kikuno R."/>
            <person name="Ohara R."/>
            <person name="Inamoto S."/>
            <person name="Koseki H."/>
            <person name="Hiraoka S."/>
            <person name="Saga Y."/>
            <person name="Nagase T."/>
            <person name="Ohara O."/>
            <person name="Koga H."/>
        </authorList>
    </citation>
    <scope>NUCLEOTIDE SEQUENCE [LARGE SCALE MRNA] (ISOFORM 2)</scope>
    <source>
        <tissue>Embryonic tail</tissue>
    </source>
</reference>
<reference key="2">
    <citation type="journal article" date="2004" name="Genome Res.">
        <title>The status, quality, and expansion of the NIH full-length cDNA project: the Mammalian Gene Collection (MGC).</title>
        <authorList>
            <consortium name="The MGC Project Team"/>
        </authorList>
    </citation>
    <scope>NUCLEOTIDE SEQUENCE [LARGE SCALE MRNA] (ISOFORM 1)</scope>
    <source>
        <tissue>Eye</tissue>
        <tissue>Mammary tumor</tissue>
    </source>
</reference>
<reference key="3">
    <citation type="journal article" date="2005" name="Science">
        <title>The transcriptional landscape of the mammalian genome.</title>
        <authorList>
            <person name="Carninci P."/>
            <person name="Kasukawa T."/>
            <person name="Katayama S."/>
            <person name="Gough J."/>
            <person name="Frith M.C."/>
            <person name="Maeda N."/>
            <person name="Oyama R."/>
            <person name="Ravasi T."/>
            <person name="Lenhard B."/>
            <person name="Wells C."/>
            <person name="Kodzius R."/>
            <person name="Shimokawa K."/>
            <person name="Bajic V.B."/>
            <person name="Brenner S.E."/>
            <person name="Batalov S."/>
            <person name="Forrest A.R."/>
            <person name="Zavolan M."/>
            <person name="Davis M.J."/>
            <person name="Wilming L.G."/>
            <person name="Aidinis V."/>
            <person name="Allen J.E."/>
            <person name="Ambesi-Impiombato A."/>
            <person name="Apweiler R."/>
            <person name="Aturaliya R.N."/>
            <person name="Bailey T.L."/>
            <person name="Bansal M."/>
            <person name="Baxter L."/>
            <person name="Beisel K.W."/>
            <person name="Bersano T."/>
            <person name="Bono H."/>
            <person name="Chalk A.M."/>
            <person name="Chiu K.P."/>
            <person name="Choudhary V."/>
            <person name="Christoffels A."/>
            <person name="Clutterbuck D.R."/>
            <person name="Crowe M.L."/>
            <person name="Dalla E."/>
            <person name="Dalrymple B.P."/>
            <person name="de Bono B."/>
            <person name="Della Gatta G."/>
            <person name="di Bernardo D."/>
            <person name="Down T."/>
            <person name="Engstrom P."/>
            <person name="Fagiolini M."/>
            <person name="Faulkner G."/>
            <person name="Fletcher C.F."/>
            <person name="Fukushima T."/>
            <person name="Furuno M."/>
            <person name="Futaki S."/>
            <person name="Gariboldi M."/>
            <person name="Georgii-Hemming P."/>
            <person name="Gingeras T.R."/>
            <person name="Gojobori T."/>
            <person name="Green R.E."/>
            <person name="Gustincich S."/>
            <person name="Harbers M."/>
            <person name="Hayashi Y."/>
            <person name="Hensch T.K."/>
            <person name="Hirokawa N."/>
            <person name="Hill D."/>
            <person name="Huminiecki L."/>
            <person name="Iacono M."/>
            <person name="Ikeo K."/>
            <person name="Iwama A."/>
            <person name="Ishikawa T."/>
            <person name="Jakt M."/>
            <person name="Kanapin A."/>
            <person name="Katoh M."/>
            <person name="Kawasawa Y."/>
            <person name="Kelso J."/>
            <person name="Kitamura H."/>
            <person name="Kitano H."/>
            <person name="Kollias G."/>
            <person name="Krishnan S.P."/>
            <person name="Kruger A."/>
            <person name="Kummerfeld S.K."/>
            <person name="Kurochkin I.V."/>
            <person name="Lareau L.F."/>
            <person name="Lazarevic D."/>
            <person name="Lipovich L."/>
            <person name="Liu J."/>
            <person name="Liuni S."/>
            <person name="McWilliam S."/>
            <person name="Madan Babu M."/>
            <person name="Madera M."/>
            <person name="Marchionni L."/>
            <person name="Matsuda H."/>
            <person name="Matsuzawa S."/>
            <person name="Miki H."/>
            <person name="Mignone F."/>
            <person name="Miyake S."/>
            <person name="Morris K."/>
            <person name="Mottagui-Tabar S."/>
            <person name="Mulder N."/>
            <person name="Nakano N."/>
            <person name="Nakauchi H."/>
            <person name="Ng P."/>
            <person name="Nilsson R."/>
            <person name="Nishiguchi S."/>
            <person name="Nishikawa S."/>
            <person name="Nori F."/>
            <person name="Ohara O."/>
            <person name="Okazaki Y."/>
            <person name="Orlando V."/>
            <person name="Pang K.C."/>
            <person name="Pavan W.J."/>
            <person name="Pavesi G."/>
            <person name="Pesole G."/>
            <person name="Petrovsky N."/>
            <person name="Piazza S."/>
            <person name="Reed J."/>
            <person name="Reid J.F."/>
            <person name="Ring B.Z."/>
            <person name="Ringwald M."/>
            <person name="Rost B."/>
            <person name="Ruan Y."/>
            <person name="Salzberg S.L."/>
            <person name="Sandelin A."/>
            <person name="Schneider C."/>
            <person name="Schoenbach C."/>
            <person name="Sekiguchi K."/>
            <person name="Semple C.A."/>
            <person name="Seno S."/>
            <person name="Sessa L."/>
            <person name="Sheng Y."/>
            <person name="Shibata Y."/>
            <person name="Shimada H."/>
            <person name="Shimada K."/>
            <person name="Silva D."/>
            <person name="Sinclair B."/>
            <person name="Sperling S."/>
            <person name="Stupka E."/>
            <person name="Sugiura K."/>
            <person name="Sultana R."/>
            <person name="Takenaka Y."/>
            <person name="Taki K."/>
            <person name="Tammoja K."/>
            <person name="Tan S.L."/>
            <person name="Tang S."/>
            <person name="Taylor M.S."/>
            <person name="Tegner J."/>
            <person name="Teichmann S.A."/>
            <person name="Ueda H.R."/>
            <person name="van Nimwegen E."/>
            <person name="Verardo R."/>
            <person name="Wei C.L."/>
            <person name="Yagi K."/>
            <person name="Yamanishi H."/>
            <person name="Zabarovsky E."/>
            <person name="Zhu S."/>
            <person name="Zimmer A."/>
            <person name="Hide W."/>
            <person name="Bult C."/>
            <person name="Grimmond S.M."/>
            <person name="Teasdale R.D."/>
            <person name="Liu E.T."/>
            <person name="Brusic V."/>
            <person name="Quackenbush J."/>
            <person name="Wahlestedt C."/>
            <person name="Mattick J.S."/>
            <person name="Hume D.A."/>
            <person name="Kai C."/>
            <person name="Sasaki D."/>
            <person name="Tomaru Y."/>
            <person name="Fukuda S."/>
            <person name="Kanamori-Katayama M."/>
            <person name="Suzuki M."/>
            <person name="Aoki J."/>
            <person name="Arakawa T."/>
            <person name="Iida J."/>
            <person name="Imamura K."/>
            <person name="Itoh M."/>
            <person name="Kato T."/>
            <person name="Kawaji H."/>
            <person name="Kawagashira N."/>
            <person name="Kawashima T."/>
            <person name="Kojima M."/>
            <person name="Kondo S."/>
            <person name="Konno H."/>
            <person name="Nakano K."/>
            <person name="Ninomiya N."/>
            <person name="Nishio T."/>
            <person name="Okada M."/>
            <person name="Plessy C."/>
            <person name="Shibata K."/>
            <person name="Shiraki T."/>
            <person name="Suzuki S."/>
            <person name="Tagami M."/>
            <person name="Waki K."/>
            <person name="Watahiki A."/>
            <person name="Okamura-Oho Y."/>
            <person name="Suzuki H."/>
            <person name="Kawai J."/>
            <person name="Hayashizaki Y."/>
        </authorList>
    </citation>
    <scope>NUCLEOTIDE SEQUENCE [LARGE SCALE MRNA] OF 1-751 (ISOFORM 1)</scope>
    <source>
        <strain>C57BL/6J</strain>
        <tissue>Thymus</tissue>
    </source>
</reference>
<reference key="4">
    <citation type="journal article" date="2007" name="Nat. Genet.">
        <title>IFT80, which encodes a conserved intraflagellar transport protein, is mutated in Jeune asphyxiating thoracic dystrophy.</title>
        <authorList>
            <person name="Beales P.L."/>
            <person name="Bland E."/>
            <person name="Tobin J.L."/>
            <person name="Bacchelli C."/>
            <person name="Tuysuz B."/>
            <person name="Hill J."/>
            <person name="Rix S."/>
            <person name="Pearson C.G."/>
            <person name="Kai M."/>
            <person name="Hartley J."/>
            <person name="Johnson C."/>
            <person name="Irving M."/>
            <person name="Elcioglu N."/>
            <person name="Winey M."/>
            <person name="Tada M."/>
            <person name="Scambler P.J."/>
        </authorList>
    </citation>
    <scope>SUBCELLULAR LOCATION</scope>
</reference>
<reference key="5">
    <citation type="journal article" date="2009" name="Cell Motil. Cytoskeleton">
        <title>Characterization of mouse IFT complex B.</title>
        <authorList>
            <person name="Follit J.A."/>
            <person name="Xu F."/>
            <person name="Keady B.T."/>
            <person name="Pazour G.J."/>
        </authorList>
    </citation>
    <scope>IDENTIFICATION IN THE IFT COMPLEX B</scope>
    <scope>INTERACTION WITH IFT88</scope>
    <scope>SUBCELLULAR LOCATION</scope>
</reference>
<reference key="6">
    <citation type="journal article" date="2010" name="Cell">
        <title>A tissue-specific atlas of mouse protein phosphorylation and expression.</title>
        <authorList>
            <person name="Huttlin E.L."/>
            <person name="Jedrychowski M.P."/>
            <person name="Elias J.E."/>
            <person name="Goswami T."/>
            <person name="Rad R."/>
            <person name="Beausoleil S.A."/>
            <person name="Villen J."/>
            <person name="Haas W."/>
            <person name="Sowa M.E."/>
            <person name="Gygi S.P."/>
        </authorList>
    </citation>
    <scope>IDENTIFICATION BY MASS SPECTROMETRY [LARGE SCALE ANALYSIS]</scope>
    <source>
        <tissue>Testis</tissue>
    </source>
</reference>
<reference key="7">
    <citation type="journal article" date="2013" name="Exp. Cell Res.">
        <title>Interaction of mouse TTC30/DYF-1 with multiple intraflagellar transport complex B proteins and KIF17.</title>
        <authorList>
            <person name="Howard P.W."/>
            <person name="Jue S.F."/>
            <person name="Maurer R.A."/>
        </authorList>
    </citation>
    <scope>IDENTIFICATION IN THE IFT COMPLEX B</scope>
    <scope>INTERACTION WITH IFT57 AND IFT70B</scope>
</reference>
<sequence>MRLKISLSKEPKHQELVSCVGWTTAEELYSCSDDHQIVKWNLLTSETSLIVKLPDDIYPIDLHWFPKSLGIKKQTQAESFVLTSSDGKFHLISKLGRVEKSVEAHCGAVLAGRWNYEGTALVTVGEDGQVKIWSKTGMLRSTLAQQGTPVYSVAWGPDSEKVLYTAGKQLIIKPLQPNAKVLQWKAHDGIILKVDWNSVNDLILSAGEDCKYKVWDSYGRVLYGSQPHEHPITSVAWAPDGELFAVGSFHTLRLCDKTGWSYALEKPNTGSIFNIAWSIDGTQIAGACGNGHVVFAHVVEQRWEWKNFQVTLTKRRTMQVRNVLNDAVDLLEFRDRVIKASLNHAHLVVSTSLQCYVFSTKNWNTPLIFDLKEGTVSLILQAERHFLLVDGGGIYLHSYEGRFISSPKFPGMRTDILNAQTVSLSNDTIAIKDKADEKIIFLFEASTGKPLGDGKLLSHKNEISEIALDQKGLTNDRKIAFIDKNRDLYITSVKRFGKEEQIIKLGTMVHTLAWCDTCNILCGIQDTRFTVWYYPNTIYVDRDILPKTLYERDASEYSKNPHIVSFVGNQVTIRRADGSLVHISISPYPAILHEYVSSSKWEEAVRLCRFVKEQSMWACLAAMAVANRDMVTAEIAYAAVGEIDKVRYINAIKDLPSRESKMAHILMFSGNIQEAETVLLQAGLVYQAIQININLYNWERALELAVKYKTHVDTVLAYRQKFLDTFGKQETNKRYLQYAEGLQIDWEKIKAKIEMEITKERDRSSSGQSSKSVGLKH</sequence>